<accession>Q0I0T6</accession>
<reference key="1">
    <citation type="submission" date="2006-08" db="EMBL/GenBank/DDBJ databases">
        <title>Complete sequence of chromosome 1 of Shewanella sp. MR-7.</title>
        <authorList>
            <person name="Copeland A."/>
            <person name="Lucas S."/>
            <person name="Lapidus A."/>
            <person name="Barry K."/>
            <person name="Detter J.C."/>
            <person name="Glavina del Rio T."/>
            <person name="Hammon N."/>
            <person name="Israni S."/>
            <person name="Dalin E."/>
            <person name="Tice H."/>
            <person name="Pitluck S."/>
            <person name="Kiss H."/>
            <person name="Brettin T."/>
            <person name="Bruce D."/>
            <person name="Han C."/>
            <person name="Tapia R."/>
            <person name="Gilna P."/>
            <person name="Schmutz J."/>
            <person name="Larimer F."/>
            <person name="Land M."/>
            <person name="Hauser L."/>
            <person name="Kyrpides N."/>
            <person name="Mikhailova N."/>
            <person name="Nealson K."/>
            <person name="Konstantinidis K."/>
            <person name="Klappenbach J."/>
            <person name="Tiedje J."/>
            <person name="Richardson P."/>
        </authorList>
    </citation>
    <scope>NUCLEOTIDE SEQUENCE [LARGE SCALE GENOMIC DNA]</scope>
    <source>
        <strain>MR-7</strain>
    </source>
</reference>
<dbReference type="EMBL" id="CP000444">
    <property type="protein sequence ID" value="ABI41019.1"/>
    <property type="molecule type" value="Genomic_DNA"/>
</dbReference>
<dbReference type="SMR" id="Q0I0T6"/>
<dbReference type="KEGG" id="shm:Shewmr7_0013"/>
<dbReference type="HOGENOM" id="CLU_165255_5_0_6"/>
<dbReference type="GO" id="GO:0005737">
    <property type="term" value="C:cytoplasm"/>
    <property type="evidence" value="ECO:0007669"/>
    <property type="project" value="UniProtKB-SubCell"/>
</dbReference>
<dbReference type="GO" id="GO:0097163">
    <property type="term" value="F:sulfur carrier activity"/>
    <property type="evidence" value="ECO:0007669"/>
    <property type="project" value="UniProtKB-UniRule"/>
</dbReference>
<dbReference type="GO" id="GO:0002143">
    <property type="term" value="P:tRNA wobble position uridine thiolation"/>
    <property type="evidence" value="ECO:0007669"/>
    <property type="project" value="InterPro"/>
</dbReference>
<dbReference type="CDD" id="cd03423">
    <property type="entry name" value="SirA"/>
    <property type="match status" value="1"/>
</dbReference>
<dbReference type="Gene3D" id="3.30.110.40">
    <property type="entry name" value="TusA-like domain"/>
    <property type="match status" value="1"/>
</dbReference>
<dbReference type="HAMAP" id="MF_00413">
    <property type="entry name" value="Thiourid_synth_A"/>
    <property type="match status" value="1"/>
</dbReference>
<dbReference type="InterPro" id="IPR022931">
    <property type="entry name" value="Sulphur_carrier_TusA"/>
</dbReference>
<dbReference type="InterPro" id="IPR001455">
    <property type="entry name" value="TusA-like"/>
</dbReference>
<dbReference type="InterPro" id="IPR036868">
    <property type="entry name" value="TusA-like_sf"/>
</dbReference>
<dbReference type="NCBIfam" id="NF001423">
    <property type="entry name" value="PRK00299.1"/>
    <property type="match status" value="1"/>
</dbReference>
<dbReference type="PANTHER" id="PTHR33279:SF2">
    <property type="entry name" value="SULFUR CARRIER PROTEIN TUSA"/>
    <property type="match status" value="1"/>
</dbReference>
<dbReference type="PANTHER" id="PTHR33279">
    <property type="entry name" value="SULFUR CARRIER PROTEIN YEDF-RELATED"/>
    <property type="match status" value="1"/>
</dbReference>
<dbReference type="Pfam" id="PF01206">
    <property type="entry name" value="TusA"/>
    <property type="match status" value="1"/>
</dbReference>
<dbReference type="SUPFAM" id="SSF64307">
    <property type="entry name" value="SirA-like"/>
    <property type="match status" value="1"/>
</dbReference>
<dbReference type="PROSITE" id="PS01148">
    <property type="entry name" value="UPF0033"/>
    <property type="match status" value="1"/>
</dbReference>
<evidence type="ECO:0000255" key="1">
    <source>
        <dbReference type="HAMAP-Rule" id="MF_00413"/>
    </source>
</evidence>
<keyword id="KW-0963">Cytoplasm</keyword>
<organism>
    <name type="scientific">Shewanella sp. (strain MR-7)</name>
    <dbReference type="NCBI Taxonomy" id="60481"/>
    <lineage>
        <taxon>Bacteria</taxon>
        <taxon>Pseudomonadati</taxon>
        <taxon>Pseudomonadota</taxon>
        <taxon>Gammaproteobacteria</taxon>
        <taxon>Alteromonadales</taxon>
        <taxon>Shewanellaceae</taxon>
        <taxon>Shewanella</taxon>
    </lineage>
</organism>
<proteinExistence type="inferred from homology"/>
<name>TUSA_SHESR</name>
<protein>
    <recommendedName>
        <fullName evidence="1">Sulfur carrier protein TusA</fullName>
    </recommendedName>
</protein>
<comment type="function">
    <text evidence="1">Sulfur carrier protein which probably makes part of a sulfur-relay system.</text>
</comment>
<comment type="subcellular location">
    <subcellularLocation>
        <location evidence="1">Cytoplasm</location>
    </subcellularLocation>
</comment>
<comment type="similarity">
    <text evidence="1">Belongs to the sulfur carrier protein TusA family.</text>
</comment>
<gene>
    <name evidence="1" type="primary">tusA</name>
    <name type="ordered locus">Shewmr7_0013</name>
</gene>
<feature type="chain" id="PRO_1000050030" description="Sulfur carrier protein TusA">
    <location>
        <begin position="1"/>
        <end position="81"/>
    </location>
</feature>
<feature type="active site" description="Cysteine persulfide intermediate" evidence="1">
    <location>
        <position position="19"/>
    </location>
</feature>
<sequence length="81" mass="9130">MNDVFSTAQHKLDALGLRCPEPVMMVRKTVRQMAQGETLLIIADDPATTRDIPSFCEFMDHTLIASETSQTPYQYLIKKGL</sequence>